<organism>
    <name type="scientific">Geobacter sp. (strain M21)</name>
    <dbReference type="NCBI Taxonomy" id="443144"/>
    <lineage>
        <taxon>Bacteria</taxon>
        <taxon>Pseudomonadati</taxon>
        <taxon>Thermodesulfobacteriota</taxon>
        <taxon>Desulfuromonadia</taxon>
        <taxon>Geobacterales</taxon>
        <taxon>Geobacteraceae</taxon>
        <taxon>Geobacter</taxon>
    </lineage>
</organism>
<protein>
    <recommendedName>
        <fullName evidence="1">Large ribosomal subunit protein bL12</fullName>
    </recommendedName>
    <alternativeName>
        <fullName evidence="2">50S ribosomal protein L7/L12</fullName>
    </alternativeName>
</protein>
<gene>
    <name evidence="1" type="primary">rplL</name>
    <name type="ordered locus">GM21_3336</name>
</gene>
<proteinExistence type="inferred from homology"/>
<name>RL7_GEOSM</name>
<dbReference type="EMBL" id="CP001661">
    <property type="protein sequence ID" value="ACT19361.1"/>
    <property type="molecule type" value="Genomic_DNA"/>
</dbReference>
<dbReference type="SMR" id="C6E4R5"/>
<dbReference type="STRING" id="443144.GM21_3336"/>
<dbReference type="KEGG" id="gem:GM21_3336"/>
<dbReference type="eggNOG" id="COG0222">
    <property type="taxonomic scope" value="Bacteria"/>
</dbReference>
<dbReference type="HOGENOM" id="CLU_086499_3_0_7"/>
<dbReference type="OrthoDB" id="9811748at2"/>
<dbReference type="GO" id="GO:0022625">
    <property type="term" value="C:cytosolic large ribosomal subunit"/>
    <property type="evidence" value="ECO:0007669"/>
    <property type="project" value="TreeGrafter"/>
</dbReference>
<dbReference type="GO" id="GO:0003729">
    <property type="term" value="F:mRNA binding"/>
    <property type="evidence" value="ECO:0007669"/>
    <property type="project" value="TreeGrafter"/>
</dbReference>
<dbReference type="GO" id="GO:0003735">
    <property type="term" value="F:structural constituent of ribosome"/>
    <property type="evidence" value="ECO:0007669"/>
    <property type="project" value="InterPro"/>
</dbReference>
<dbReference type="GO" id="GO:0006412">
    <property type="term" value="P:translation"/>
    <property type="evidence" value="ECO:0007669"/>
    <property type="project" value="UniProtKB-UniRule"/>
</dbReference>
<dbReference type="CDD" id="cd00387">
    <property type="entry name" value="Ribosomal_L7_L12"/>
    <property type="match status" value="1"/>
</dbReference>
<dbReference type="FunFam" id="1.20.5.710:FF:000008">
    <property type="entry name" value="50S ribosomal protein L7/L12"/>
    <property type="match status" value="1"/>
</dbReference>
<dbReference type="FunFam" id="3.30.1390.10:FF:000001">
    <property type="entry name" value="50S ribosomal protein L7/L12"/>
    <property type="match status" value="1"/>
</dbReference>
<dbReference type="Gene3D" id="3.30.1390.10">
    <property type="match status" value="1"/>
</dbReference>
<dbReference type="Gene3D" id="1.20.5.710">
    <property type="entry name" value="Single helix bin"/>
    <property type="match status" value="1"/>
</dbReference>
<dbReference type="HAMAP" id="MF_00368">
    <property type="entry name" value="Ribosomal_bL12"/>
    <property type="match status" value="1"/>
</dbReference>
<dbReference type="InterPro" id="IPR000206">
    <property type="entry name" value="Ribosomal_bL12"/>
</dbReference>
<dbReference type="InterPro" id="IPR013823">
    <property type="entry name" value="Ribosomal_bL12_C"/>
</dbReference>
<dbReference type="InterPro" id="IPR014719">
    <property type="entry name" value="Ribosomal_bL12_C/ClpS-like"/>
</dbReference>
<dbReference type="InterPro" id="IPR008932">
    <property type="entry name" value="Ribosomal_bL12_oligo"/>
</dbReference>
<dbReference type="InterPro" id="IPR036235">
    <property type="entry name" value="Ribosomal_bL12_oligo_N_sf"/>
</dbReference>
<dbReference type="NCBIfam" id="TIGR00855">
    <property type="entry name" value="L12"/>
    <property type="match status" value="1"/>
</dbReference>
<dbReference type="PANTHER" id="PTHR45987">
    <property type="entry name" value="39S RIBOSOMAL PROTEIN L12"/>
    <property type="match status" value="1"/>
</dbReference>
<dbReference type="PANTHER" id="PTHR45987:SF4">
    <property type="entry name" value="LARGE RIBOSOMAL SUBUNIT PROTEIN BL12M"/>
    <property type="match status" value="1"/>
</dbReference>
<dbReference type="Pfam" id="PF00542">
    <property type="entry name" value="Ribosomal_L12"/>
    <property type="match status" value="1"/>
</dbReference>
<dbReference type="Pfam" id="PF16320">
    <property type="entry name" value="Ribosomal_L12_N"/>
    <property type="match status" value="1"/>
</dbReference>
<dbReference type="SUPFAM" id="SSF54736">
    <property type="entry name" value="ClpS-like"/>
    <property type="match status" value="1"/>
</dbReference>
<dbReference type="SUPFAM" id="SSF48300">
    <property type="entry name" value="Ribosomal protein L7/12, oligomerisation (N-terminal) domain"/>
    <property type="match status" value="1"/>
</dbReference>
<comment type="function">
    <text evidence="1">Forms part of the ribosomal stalk which helps the ribosome interact with GTP-bound translation factors. Is thus essential for accurate translation.</text>
</comment>
<comment type="subunit">
    <text evidence="1">Homodimer. Part of the ribosomal stalk of the 50S ribosomal subunit. Forms a multimeric L10(L12)X complex, where L10 forms an elongated spine to which 2 to 4 L12 dimers bind in a sequential fashion. Binds GTP-bound translation factors.</text>
</comment>
<comment type="similarity">
    <text evidence="1">Belongs to the bacterial ribosomal protein bL12 family.</text>
</comment>
<keyword id="KW-0687">Ribonucleoprotein</keyword>
<keyword id="KW-0689">Ribosomal protein</keyword>
<feature type="chain" id="PRO_1000205560" description="Large ribosomal subunit protein bL12">
    <location>
        <begin position="1"/>
        <end position="126"/>
    </location>
</feature>
<evidence type="ECO:0000255" key="1">
    <source>
        <dbReference type="HAMAP-Rule" id="MF_00368"/>
    </source>
</evidence>
<evidence type="ECO:0000305" key="2"/>
<accession>C6E4R5</accession>
<sequence length="126" mass="12983">MAITKEEVISFIENMSVLELANLVKELEEKFGVSAAAPVAVAAAGPAAGPAEAAEEKTEFDVILKSAGANKIAVIKVVRALTSLGLKEAKDLVDGAPQPVKTGISKEEAADAQKQLVEAGAEVEVK</sequence>
<reference key="1">
    <citation type="submission" date="2009-07" db="EMBL/GenBank/DDBJ databases">
        <title>Complete sequence of Geobacter sp. M21.</title>
        <authorList>
            <consortium name="US DOE Joint Genome Institute"/>
            <person name="Lucas S."/>
            <person name="Copeland A."/>
            <person name="Lapidus A."/>
            <person name="Glavina del Rio T."/>
            <person name="Dalin E."/>
            <person name="Tice H."/>
            <person name="Bruce D."/>
            <person name="Goodwin L."/>
            <person name="Pitluck S."/>
            <person name="Saunders E."/>
            <person name="Brettin T."/>
            <person name="Detter J.C."/>
            <person name="Han C."/>
            <person name="Larimer F."/>
            <person name="Land M."/>
            <person name="Hauser L."/>
            <person name="Kyrpides N."/>
            <person name="Ovchinnikova G."/>
            <person name="Lovley D."/>
        </authorList>
    </citation>
    <scope>NUCLEOTIDE SEQUENCE [LARGE SCALE GENOMIC DNA]</scope>
    <source>
        <strain>M21</strain>
    </source>
</reference>